<keyword id="KW-0963">Cytoplasm</keyword>
<keyword id="KW-0391">Immunity</keyword>
<keyword id="KW-0399">Innate immunity</keyword>
<keyword id="KW-0597">Phosphoprotein</keyword>
<keyword id="KW-1185">Reference proteome</keyword>
<gene>
    <name evidence="4" type="primary">Tifa</name>
</gene>
<organism>
    <name type="scientific">Rattus norvegicus</name>
    <name type="common">Rat</name>
    <dbReference type="NCBI Taxonomy" id="10116"/>
    <lineage>
        <taxon>Eukaryota</taxon>
        <taxon>Metazoa</taxon>
        <taxon>Chordata</taxon>
        <taxon>Craniata</taxon>
        <taxon>Vertebrata</taxon>
        <taxon>Euteleostomi</taxon>
        <taxon>Mammalia</taxon>
        <taxon>Eutheria</taxon>
        <taxon>Euarchontoglires</taxon>
        <taxon>Glires</taxon>
        <taxon>Rodentia</taxon>
        <taxon>Myomorpha</taxon>
        <taxon>Muroidea</taxon>
        <taxon>Muridae</taxon>
        <taxon>Murinae</taxon>
        <taxon>Rattus</taxon>
    </lineage>
</organism>
<sequence>MSTFEDADTEETVTCLQMTIYHPGQLQSGIFKSIRFCSKEKFPSIEVVKFGRNSNMCQYTFQDKQVSRVQFALQPFKQFNSSVLSFEIKNMSKKTSLMVDNQELGYLNKMDLPYKCMLRFGEYQFLLQKEDGESVESFETQFILSPRPLLQENNWPTQSPIPEDGVYSSYFTHRSSPAEMDENEL</sequence>
<reference key="1">
    <citation type="journal article" date="2004" name="Genome Res.">
        <title>The status, quality, and expansion of the NIH full-length cDNA project: the Mammalian Gene Collection (MGC).</title>
        <authorList>
            <consortium name="The MGC Project Team"/>
        </authorList>
    </citation>
    <scope>NUCLEOTIDE SEQUENCE [LARGE SCALE MRNA]</scope>
    <source>
        <strain>Brown Norway</strain>
        <tissue>Heart</tissue>
    </source>
</reference>
<comment type="function">
    <text evidence="1">Adapter molecule that plays a key role in the activation of pro-inflammatory NF-kappa-B signaling following detection of bacterial pathogen-associated molecular pattern metabolites (PAMPs). Promotes activation of an innate immune response by inducing the oligomerization and polyubiquitination of TRAF6, which leads to the activation of TAK1 and IKK through a proteasome-independent mechanism. TIFA-dependent innate immune response is triggered by ADP-D-glycero-beta-D-manno-heptose (ADP-Heptose), a potent PAMP present in all Gram-negative and some Gram-positive bacteria: ADP-Heptose is recognized by ALPK1, which phosphorylates TIFA at Thr-9, leading to TIFA homooligomerization and subsequent activation of pro-inflammatory NF-kappa-B signaling.</text>
</comment>
<comment type="subunit">
    <text evidence="1">Homooligomer; homooligomerizes following phosphorylation at Thr-9. Interacts with IRAK1, TRAF2 and TRAF6. Interacts with TIFAB; binding to TIFAB inhibits TRAF6 activation, possibly by inducing a conformational change in TIFA. Interacts with ZCCHC11; binding to ZCCHC11 suppresses the TRAF6-dependent activation of NF-kappa-B.</text>
</comment>
<comment type="subcellular location">
    <subcellularLocation>
        <location evidence="1">Cytoplasm</location>
    </subcellularLocation>
    <text evidence="1">Colocalizes with lysosomal marker LAMP2 following homooligomerization and subsequent activation.</text>
</comment>
<comment type="domain">
    <text evidence="1">The FHA domain recognizes and binds phosphorylated Thr-9, promoting homooligomerization and subsequent activation of NF-kappa-B.</text>
</comment>
<comment type="PTM">
    <text evidence="1">Phosphorylated at Thr-9 following detection of ADP-D-glycero-beta-D-manno-heptose (ADP-Heptose) by ALPK1. Phosphorylation at Thr-9 by ALPK1 leads to the formation of an intermolecular binding between the FHA domain and phosphorylated Thr-9, promoting TIFA oligomerization and TIFA-mediated NF-kappa-B activation.</text>
</comment>
<comment type="similarity">
    <text evidence="3">Belongs to the TIFA family.</text>
</comment>
<evidence type="ECO:0000250" key="1">
    <source>
        <dbReference type="UniProtKB" id="Q96CG3"/>
    </source>
</evidence>
<evidence type="ECO:0000255" key="2">
    <source>
        <dbReference type="PROSITE-ProRule" id="PRU00086"/>
    </source>
</evidence>
<evidence type="ECO:0000305" key="3"/>
<evidence type="ECO:0000312" key="4">
    <source>
        <dbReference type="RGD" id="1359151"/>
    </source>
</evidence>
<dbReference type="EMBL" id="BC083765">
    <property type="protein sequence ID" value="AAH83765.1"/>
    <property type="molecule type" value="mRNA"/>
</dbReference>
<dbReference type="RefSeq" id="NP_001014066.1">
    <property type="nucleotide sequence ID" value="NM_001014044.1"/>
</dbReference>
<dbReference type="RefSeq" id="XP_017446427.1">
    <property type="nucleotide sequence ID" value="XM_017590938.1"/>
</dbReference>
<dbReference type="RefSeq" id="XP_038958391.1">
    <property type="nucleotide sequence ID" value="XM_039102463.2"/>
</dbReference>
<dbReference type="RefSeq" id="XP_038958392.1">
    <property type="nucleotide sequence ID" value="XM_039102464.2"/>
</dbReference>
<dbReference type="RefSeq" id="XP_038958393.1">
    <property type="nucleotide sequence ID" value="XM_039102465.2"/>
</dbReference>
<dbReference type="SMR" id="Q5XIB9"/>
<dbReference type="FunCoup" id="Q5XIB9">
    <property type="interactions" value="427"/>
</dbReference>
<dbReference type="STRING" id="10116.ENSRNOP00000072333"/>
<dbReference type="PhosphoSitePlus" id="Q5XIB9"/>
<dbReference type="PaxDb" id="10116-ENSRNOP00000061870"/>
<dbReference type="Ensembl" id="ENSRNOT00000014533.7">
    <property type="protein sequence ID" value="ENSRNOP00000061870.1"/>
    <property type="gene ID" value="ENSRNOG00000010941.7"/>
</dbReference>
<dbReference type="Ensembl" id="ENSRNOT00000102851.1">
    <property type="protein sequence ID" value="ENSRNOP00000087830.1"/>
    <property type="gene ID" value="ENSRNOG00000010941.7"/>
</dbReference>
<dbReference type="Ensembl" id="ENSRNOT00000112612.1">
    <property type="protein sequence ID" value="ENSRNOP00000077082.1"/>
    <property type="gene ID" value="ENSRNOG00000010941.7"/>
</dbReference>
<dbReference type="GeneID" id="310877"/>
<dbReference type="KEGG" id="rno:310877"/>
<dbReference type="UCSC" id="RGD:1359151">
    <property type="organism name" value="rat"/>
</dbReference>
<dbReference type="AGR" id="RGD:1359151"/>
<dbReference type="CTD" id="92610"/>
<dbReference type="RGD" id="1359151">
    <property type="gene designation" value="Tifa"/>
</dbReference>
<dbReference type="eggNOG" id="ENOG502S0RF">
    <property type="taxonomic scope" value="Eukaryota"/>
</dbReference>
<dbReference type="GeneTree" id="ENSGT00940000154589"/>
<dbReference type="HOGENOM" id="CLU_125520_0_0_1"/>
<dbReference type="InParanoid" id="Q5XIB9"/>
<dbReference type="Reactome" id="R-RNO-9645460">
    <property type="pathway name" value="Alpha-protein kinase 1 signaling pathway"/>
</dbReference>
<dbReference type="PRO" id="PR:Q5XIB9"/>
<dbReference type="Proteomes" id="UP000002494">
    <property type="component" value="Chromosome 2"/>
</dbReference>
<dbReference type="Bgee" id="ENSRNOG00000010941">
    <property type="expression patterns" value="Expressed in spleen and 18 other cell types or tissues"/>
</dbReference>
<dbReference type="ExpressionAtlas" id="Q5XIB9">
    <property type="expression patterns" value="baseline and differential"/>
</dbReference>
<dbReference type="GO" id="GO:0005737">
    <property type="term" value="C:cytoplasm"/>
    <property type="evidence" value="ECO:0000250"/>
    <property type="project" value="UniProtKB"/>
</dbReference>
<dbReference type="GO" id="GO:0002753">
    <property type="term" value="P:cytoplasmic pattern recognition receptor signaling pathway"/>
    <property type="evidence" value="ECO:0000250"/>
    <property type="project" value="UniProtKB"/>
</dbReference>
<dbReference type="GO" id="GO:0045087">
    <property type="term" value="P:innate immune response"/>
    <property type="evidence" value="ECO:0000250"/>
    <property type="project" value="UniProtKB"/>
</dbReference>
<dbReference type="GO" id="GO:0043123">
    <property type="term" value="P:positive regulation of canonical NF-kappaB signal transduction"/>
    <property type="evidence" value="ECO:0000250"/>
    <property type="project" value="UniProtKB"/>
</dbReference>
<dbReference type="GO" id="GO:0051260">
    <property type="term" value="P:protein homooligomerization"/>
    <property type="evidence" value="ECO:0000250"/>
    <property type="project" value="UniProtKB"/>
</dbReference>
<dbReference type="GO" id="GO:0033209">
    <property type="term" value="P:tumor necrosis factor-mediated signaling pathway"/>
    <property type="evidence" value="ECO:0000266"/>
    <property type="project" value="RGD"/>
</dbReference>
<dbReference type="CDD" id="cd22714">
    <property type="entry name" value="FHA_TIFA"/>
    <property type="match status" value="1"/>
</dbReference>
<dbReference type="InterPro" id="IPR000253">
    <property type="entry name" value="FHA_dom"/>
</dbReference>
<dbReference type="InterPro" id="IPR008984">
    <property type="entry name" value="SMAD_FHA_dom_sf"/>
</dbReference>
<dbReference type="InterPro" id="IPR033621">
    <property type="entry name" value="TIFA"/>
</dbReference>
<dbReference type="PANTHER" id="PTHR31266:SF2">
    <property type="entry name" value="TRAF-INTERACTING PROTEIN WITH FHA DOMAIN-CONTAINING PROTEIN A"/>
    <property type="match status" value="1"/>
</dbReference>
<dbReference type="PANTHER" id="PTHR31266">
    <property type="entry name" value="TRAF-INTERACTING PROTEIN WITH FHA DOMAIN-CONTAINING PROTEIN A FAMILY MEMBER"/>
    <property type="match status" value="1"/>
</dbReference>
<dbReference type="Pfam" id="PF00498">
    <property type="entry name" value="FHA"/>
    <property type="match status" value="1"/>
</dbReference>
<dbReference type="SUPFAM" id="SSF49879">
    <property type="entry name" value="SMAD/FHA domain"/>
    <property type="match status" value="1"/>
</dbReference>
<dbReference type="PROSITE" id="PS50006">
    <property type="entry name" value="FHA_DOMAIN"/>
    <property type="match status" value="1"/>
</dbReference>
<proteinExistence type="evidence at transcript level"/>
<protein>
    <recommendedName>
        <fullName evidence="3">TRAF-interacting protein with FHA domain-containing protein A</fullName>
    </recommendedName>
</protein>
<accession>Q5XIB9</accession>
<feature type="chain" id="PRO_0000320691" description="TRAF-interacting protein with FHA domain-containing protein A">
    <location>
        <begin position="1"/>
        <end position="185"/>
    </location>
</feature>
<feature type="domain" description="FHA" evidence="2">
    <location>
        <begin position="48"/>
        <end position="104"/>
    </location>
</feature>
<feature type="modified residue" description="Phosphothreonine" evidence="1">
    <location>
        <position position="9"/>
    </location>
</feature>
<name>TIFA_RAT</name>